<name>IMQK_ASPFN</name>
<feature type="chain" id="PRO_0000444555" description="C6 finger transcription factor imqK">
    <location>
        <begin position="1"/>
        <end position="551"/>
    </location>
</feature>
<feature type="DNA-binding region" description="Zn(2)-C6 fungal-type" evidence="1">
    <location>
        <begin position="11"/>
        <end position="53"/>
    </location>
</feature>
<feature type="region of interest" description="Disordered" evidence="2">
    <location>
        <begin position="280"/>
        <end position="302"/>
    </location>
</feature>
<feature type="region of interest" description="Disordered" evidence="2">
    <location>
        <begin position="351"/>
        <end position="378"/>
    </location>
</feature>
<feature type="compositionally biased region" description="Low complexity" evidence="2">
    <location>
        <begin position="351"/>
        <end position="369"/>
    </location>
</feature>
<reference key="1">
    <citation type="journal article" date="2015" name="Genome Announc.">
        <title>Genome sequence of Aspergillus flavus NRRL 3357, a strain that causes aflatoxin contamination of food and feed.</title>
        <authorList>
            <person name="Nierman W.C."/>
            <person name="Yu J."/>
            <person name="Fedorova-Abrams N.D."/>
            <person name="Losada L."/>
            <person name="Cleveland T.E."/>
            <person name="Bhatnagar D."/>
            <person name="Bennett J.W."/>
            <person name="Dean R."/>
            <person name="Payne G.A."/>
        </authorList>
    </citation>
    <scope>NUCLEOTIDE SEQUENCE [LARGE SCALE GENOMIC DNA]</scope>
    <source>
        <strain>ATCC 200026 / FGSC A1120 / IAM 13836 / NRRL 3357 / JCM 12722 / SRRC 167</strain>
    </source>
</reference>
<reference key="2">
    <citation type="journal article" date="2018" name="ACS Chem. Biol.">
        <title>NRPS-derived isoquinolines and lipopetides mediate antagonism between plant pathogenic fungi and bacteria.</title>
        <authorList>
            <person name="Khalid S."/>
            <person name="Baccile J.A."/>
            <person name="Spraker J.E."/>
            <person name="Tannous J."/>
            <person name="Imran M."/>
            <person name="Schroeder F.C."/>
            <person name="Keller N.P."/>
        </authorList>
    </citation>
    <scope>INDUCTION</scope>
    <scope>FUNCTION</scope>
    <scope>DISRUPTION PHENOTYPE</scope>
</reference>
<protein>
    <recommendedName>
        <fullName evidence="4">C6 finger transcription factor imqK</fullName>
    </recommendedName>
    <alternativeName>
        <fullName evidence="4">Imizoquin biosynthesis cluster protein K</fullName>
    </alternativeName>
</protein>
<dbReference type="EMBL" id="EQ963479">
    <property type="protein sequence ID" value="EED49612.1"/>
    <property type="molecule type" value="Genomic_DNA"/>
</dbReference>
<dbReference type="RefSeq" id="XP_002379993.1">
    <property type="nucleotide sequence ID" value="XM_002379952.1"/>
</dbReference>
<dbReference type="STRING" id="332952.B8NI28"/>
<dbReference type="EnsemblFungi" id="EED49612">
    <property type="protein sequence ID" value="EED49612"/>
    <property type="gene ID" value="AFLA_064330"/>
</dbReference>
<dbReference type="VEuPathDB" id="FungiDB:AFLA_008366"/>
<dbReference type="eggNOG" id="ENOG502RJXF">
    <property type="taxonomic scope" value="Eukaryota"/>
</dbReference>
<dbReference type="HOGENOM" id="CLU_494289_0_0_1"/>
<dbReference type="OMA" id="HILRAYD"/>
<dbReference type="GO" id="GO:0005634">
    <property type="term" value="C:nucleus"/>
    <property type="evidence" value="ECO:0007669"/>
    <property type="project" value="UniProtKB-SubCell"/>
</dbReference>
<dbReference type="GO" id="GO:0003677">
    <property type="term" value="F:DNA binding"/>
    <property type="evidence" value="ECO:0007669"/>
    <property type="project" value="UniProtKB-KW"/>
</dbReference>
<dbReference type="GO" id="GO:0000981">
    <property type="term" value="F:DNA-binding transcription factor activity, RNA polymerase II-specific"/>
    <property type="evidence" value="ECO:0007669"/>
    <property type="project" value="InterPro"/>
</dbReference>
<dbReference type="GO" id="GO:0008270">
    <property type="term" value="F:zinc ion binding"/>
    <property type="evidence" value="ECO:0007669"/>
    <property type="project" value="InterPro"/>
</dbReference>
<dbReference type="GO" id="GO:0009893">
    <property type="term" value="P:positive regulation of metabolic process"/>
    <property type="evidence" value="ECO:0007669"/>
    <property type="project" value="UniProtKB-ARBA"/>
</dbReference>
<dbReference type="CDD" id="cd00067">
    <property type="entry name" value="GAL4"/>
    <property type="match status" value="1"/>
</dbReference>
<dbReference type="Gene3D" id="4.10.240.10">
    <property type="entry name" value="Zn(2)-C6 fungal-type DNA-binding domain"/>
    <property type="match status" value="1"/>
</dbReference>
<dbReference type="InterPro" id="IPR036864">
    <property type="entry name" value="Zn2-C6_fun-type_DNA-bd_sf"/>
</dbReference>
<dbReference type="InterPro" id="IPR001138">
    <property type="entry name" value="Zn2Cys6_DnaBD"/>
</dbReference>
<dbReference type="SUPFAM" id="SSF57701">
    <property type="entry name" value="Zn2/Cys6 DNA-binding domain"/>
    <property type="match status" value="1"/>
</dbReference>
<organism>
    <name type="scientific">Aspergillus flavus (strain ATCC 200026 / FGSC A1120 / IAM 13836 / NRRL 3357 / JCM 12722 / SRRC 167)</name>
    <dbReference type="NCBI Taxonomy" id="332952"/>
    <lineage>
        <taxon>Eukaryota</taxon>
        <taxon>Fungi</taxon>
        <taxon>Dikarya</taxon>
        <taxon>Ascomycota</taxon>
        <taxon>Pezizomycotina</taxon>
        <taxon>Eurotiomycetes</taxon>
        <taxon>Eurotiomycetidae</taxon>
        <taxon>Eurotiales</taxon>
        <taxon>Aspergillaceae</taxon>
        <taxon>Aspergillus</taxon>
        <taxon>Aspergillus subgen. Circumdati</taxon>
    </lineage>
</organism>
<proteinExistence type="evidence at transcript level"/>
<comment type="function">
    <text evidence="3">C6 finger transcription factor that positively regulates the cluster that mediates the biosynthesis of imizoquins A to D, tripeptide-derived alkaloids that serve a protective role against oxidative stress that are essential for normal germination (PubMed:29182847).</text>
</comment>
<comment type="subcellular location">
    <subcellularLocation>
        <location evidence="1">Nucleus</location>
    </subcellularLocation>
</comment>
<comment type="induction">
    <text evidence="3">Expression is down-regulated by ralstonins, lipopeptides produced by the plant pathogenic bacteria Ralstonia solanacearum (PubMed:29182847).</text>
</comment>
<comment type="disruption phenotype">
    <text evidence="3">Impairs the production of imizoquins and leads to delayed germination (PubMed:29182847).</text>
</comment>
<keyword id="KW-0238">DNA-binding</keyword>
<keyword id="KW-0479">Metal-binding</keyword>
<keyword id="KW-0539">Nucleus</keyword>
<keyword id="KW-0804">Transcription</keyword>
<keyword id="KW-0805">Transcription regulation</keyword>
<keyword id="KW-0862">Zinc</keyword>
<sequence>MEPDTTRRSACDRCRGQKLRCVRLPGPAREDSPRSARSVNQPCERCKRAKVVCYTTKPVSRRLPQSYTRRRSTAYADDVMHSEVDLDEGMIGSNRLRDEPTIKRTPPAIADRLAHDPFPTELWSGLDISHASLDSSAVLSHVPDPGNMVESVAAQRANSNTLPSHQHGWPEDPHGALNYFEERAHDLPDVMSVSSPTDVRLGLDTVDRRPAAATSRTNQAIHSDTVNMHSQAPGSGETSERGLYSRASNTVADAAQLCTTQLSELNMRLMKDIESTTSFRQGMSAASDPNYPASGLGETSPSSSMVKFTNTMLANCQSFLDILQRLRSPTVELRGSSNSECSYGDLEYSSNEYSSSRSQSRNHSTSASSRSKDGRISAGGGLQSVLNSDTIGLSPSLDPIKADSSALDFSAFLSILSCYTHILRAYDALFTEILEMLMESSCIQLDLKIHNLVPEVSLGGFRLSGHGDLQIKCLLHMSFIILEKIESMLGVNAPEKDPYGSNGGLLNNSQLRGLLEALYHQKEFDYIRADGTRAARVKKTMKSIQRILDSI</sequence>
<gene>
    <name evidence="4" type="primary">imqK</name>
    <name type="ORF">AFLA_064330</name>
</gene>
<evidence type="ECO:0000255" key="1">
    <source>
        <dbReference type="PROSITE-ProRule" id="PRU00227"/>
    </source>
</evidence>
<evidence type="ECO:0000256" key="2">
    <source>
        <dbReference type="SAM" id="MobiDB-lite"/>
    </source>
</evidence>
<evidence type="ECO:0000269" key="3">
    <source>
    </source>
</evidence>
<evidence type="ECO:0000303" key="4">
    <source>
    </source>
</evidence>
<accession>B8NI28</accession>